<name>GLNE_IDILO</name>
<evidence type="ECO:0000255" key="1">
    <source>
        <dbReference type="HAMAP-Rule" id="MF_00802"/>
    </source>
</evidence>
<accession>Q5QY18</accession>
<keyword id="KW-0067">ATP-binding</keyword>
<keyword id="KW-0460">Magnesium</keyword>
<keyword id="KW-0511">Multifunctional enzyme</keyword>
<keyword id="KW-0547">Nucleotide-binding</keyword>
<keyword id="KW-0548">Nucleotidyltransferase</keyword>
<keyword id="KW-1185">Reference proteome</keyword>
<keyword id="KW-0808">Transferase</keyword>
<protein>
    <recommendedName>
        <fullName evidence="1">Bifunctional glutamine synthetase adenylyltransferase/adenylyl-removing enzyme</fullName>
    </recommendedName>
    <alternativeName>
        <fullName evidence="1">ATP:glutamine synthetase adenylyltransferase</fullName>
    </alternativeName>
    <alternativeName>
        <fullName evidence="1">ATase</fullName>
    </alternativeName>
    <domain>
        <recommendedName>
            <fullName evidence="1">Glutamine synthetase adenylyl-L-tyrosine phosphorylase</fullName>
            <ecNumber evidence="1">2.7.7.89</ecNumber>
        </recommendedName>
        <alternativeName>
            <fullName evidence="1">Adenylyl removase</fullName>
            <shortName evidence="1">AR</shortName>
            <shortName evidence="1">AT-N</shortName>
        </alternativeName>
    </domain>
    <domain>
        <recommendedName>
            <fullName evidence="1">Glutamine synthetase adenylyl transferase</fullName>
            <ecNumber evidence="1">2.7.7.42</ecNumber>
        </recommendedName>
        <alternativeName>
            <fullName evidence="1">Adenylyl transferase</fullName>
            <shortName evidence="1">AT</shortName>
            <shortName evidence="1">AT-C</shortName>
        </alternativeName>
    </domain>
</protein>
<sequence length="948" mass="108663">MLTPDNKLMSETETAWERYKEVVESITLTAEQEQILRALFAVSPFIGRVAESYPEHLVTDFFDGSGSSVRLIDADSYGDRIAESLSQVTNEDEAKKCLRRLRHCWMAKLAAADILQQVSLKESLHHYSTFADAAINKSLEWLFERFVQRHGKPLDANDQLMPMLVIGMGKLGGKELNFSSDIDLIFAFPEQGETQGPGRNLEHGVFYKRLAQSLIGLLDETTADGQVFRVDMRLRPFGQSGPLVTSLNALEHYYQEQGRDWERYAMVKARMIGADEQYEQAFQQLIRPFVYRRYIDFGAIEALRKMKLLITQETRRQGVKNNIKLGAGGIREVEFIVQAHQLIRGGQEKSLQTRSVYIAMNGLVELDLIDPEHARQLLKDYEYLRVIEHRLQQIDDQQTQQLPTDETGRMRLCAMLNEPEWETLQRKIDECMERIHAEFQQVVGAESEDDEDEQGLQVLWQDMLDDDAALEIIESEGVDEPQALWTLIKNFRQESRRRSSGPRGRSALARLMPIMLRHAIQHQHPERLLERLLSIIKAVMSRTAYIELLAENPGAREQLCKLCMASPWISEQLALHPILLDELIDPQQLYSLPESKDYAAVLREYLMRIPEQDLETQMDALRQAKQALQLKIAAADISGVLELMNVSDHLSALAEAIISEVVGLAWQHLTQKHGKPAGTCLDNTGFAVLGYGKLGGQELGYGSDLDLVFVTDANYQGQTDGQRPIEVQQFYLRLAQRILHLFTTRTVAGILYDVDLRLRPSGQAGLLVTQVNSFARYLRDDAWTWELQALVRARPVYGVPALRDTVMDIRRSVLSQKRDEQELRQSIVKMREKMREHLTQRNSRKFDLKQDPGGIADIEFITQYLVLRYAHKYPELCKYSDNVRLLTEAQQLHLLTEVDAQNLINAFQIFRCESHSLALQGEQLLEEHNLDNERQAVLNCWNHLLEDD</sequence>
<feature type="chain" id="PRO_0000209250" description="Bifunctional glutamine synthetase adenylyltransferase/adenylyl-removing enzyme">
    <location>
        <begin position="1"/>
        <end position="948"/>
    </location>
</feature>
<feature type="region of interest" description="Adenylyl removase" evidence="1">
    <location>
        <begin position="1"/>
        <end position="447"/>
    </location>
</feature>
<feature type="region of interest" description="Adenylyl transferase" evidence="1">
    <location>
        <begin position="453"/>
        <end position="948"/>
    </location>
</feature>
<proteinExistence type="inferred from homology"/>
<dbReference type="EC" id="2.7.7.89" evidence="1"/>
<dbReference type="EC" id="2.7.7.42" evidence="1"/>
<dbReference type="EMBL" id="AE017340">
    <property type="protein sequence ID" value="AAV82791.1"/>
    <property type="molecule type" value="Genomic_DNA"/>
</dbReference>
<dbReference type="RefSeq" id="WP_011235187.1">
    <property type="nucleotide sequence ID" value="NC_006512.1"/>
</dbReference>
<dbReference type="SMR" id="Q5QY18"/>
<dbReference type="STRING" id="283942.IL1959"/>
<dbReference type="GeneID" id="41337149"/>
<dbReference type="KEGG" id="ilo:IL1959"/>
<dbReference type="eggNOG" id="COG1391">
    <property type="taxonomic scope" value="Bacteria"/>
</dbReference>
<dbReference type="HOGENOM" id="CLU_006233_0_1_6"/>
<dbReference type="OrthoDB" id="9759366at2"/>
<dbReference type="Proteomes" id="UP000001171">
    <property type="component" value="Chromosome"/>
</dbReference>
<dbReference type="GO" id="GO:0005829">
    <property type="term" value="C:cytosol"/>
    <property type="evidence" value="ECO:0007669"/>
    <property type="project" value="TreeGrafter"/>
</dbReference>
<dbReference type="GO" id="GO:0008882">
    <property type="term" value="F:[glutamate-ammonia-ligase] adenylyltransferase activity"/>
    <property type="evidence" value="ECO:0007669"/>
    <property type="project" value="UniProtKB-UniRule"/>
</dbReference>
<dbReference type="GO" id="GO:0047388">
    <property type="term" value="F:[glutamine synthetase]-adenylyl-L-tyrosine phosphorylase activity"/>
    <property type="evidence" value="ECO:0007669"/>
    <property type="project" value="UniProtKB-EC"/>
</dbReference>
<dbReference type="GO" id="GO:0005524">
    <property type="term" value="F:ATP binding"/>
    <property type="evidence" value="ECO:0007669"/>
    <property type="project" value="UniProtKB-UniRule"/>
</dbReference>
<dbReference type="GO" id="GO:0000287">
    <property type="term" value="F:magnesium ion binding"/>
    <property type="evidence" value="ECO:0007669"/>
    <property type="project" value="UniProtKB-UniRule"/>
</dbReference>
<dbReference type="GO" id="GO:0000820">
    <property type="term" value="P:regulation of glutamine family amino acid metabolic process"/>
    <property type="evidence" value="ECO:0007669"/>
    <property type="project" value="UniProtKB-UniRule"/>
</dbReference>
<dbReference type="CDD" id="cd05401">
    <property type="entry name" value="NT_GlnE_GlnD_like"/>
    <property type="match status" value="2"/>
</dbReference>
<dbReference type="FunFam" id="1.20.120.330:FF:000005">
    <property type="entry name" value="Bifunctional glutamine synthetase adenylyltransferase/adenylyl-removing enzyme"/>
    <property type="match status" value="1"/>
</dbReference>
<dbReference type="FunFam" id="3.30.460.10:FF:000009">
    <property type="entry name" value="Bifunctional glutamine synthetase adenylyltransferase/adenylyl-removing enzyme"/>
    <property type="match status" value="1"/>
</dbReference>
<dbReference type="Gene3D" id="1.20.120.1510">
    <property type="match status" value="1"/>
</dbReference>
<dbReference type="Gene3D" id="3.30.460.10">
    <property type="entry name" value="Beta Polymerase, domain 2"/>
    <property type="match status" value="2"/>
</dbReference>
<dbReference type="Gene3D" id="1.20.120.330">
    <property type="entry name" value="Nucleotidyltransferases domain 2"/>
    <property type="match status" value="2"/>
</dbReference>
<dbReference type="HAMAP" id="MF_00802">
    <property type="entry name" value="GlnE"/>
    <property type="match status" value="1"/>
</dbReference>
<dbReference type="InterPro" id="IPR023057">
    <property type="entry name" value="GlnE"/>
</dbReference>
<dbReference type="InterPro" id="IPR005190">
    <property type="entry name" value="GlnE_rpt_dom"/>
</dbReference>
<dbReference type="InterPro" id="IPR043519">
    <property type="entry name" value="NT_sf"/>
</dbReference>
<dbReference type="InterPro" id="IPR013546">
    <property type="entry name" value="PII_UdlTrfase/GS_AdlTrfase"/>
</dbReference>
<dbReference type="NCBIfam" id="NF008292">
    <property type="entry name" value="PRK11072.1"/>
    <property type="match status" value="1"/>
</dbReference>
<dbReference type="PANTHER" id="PTHR30621:SF0">
    <property type="entry name" value="BIFUNCTIONAL GLUTAMINE SYNTHETASE ADENYLYLTRANSFERASE_ADENYLYL-REMOVING ENZYME"/>
    <property type="match status" value="1"/>
</dbReference>
<dbReference type="PANTHER" id="PTHR30621">
    <property type="entry name" value="GLUTAMINE SYNTHETASE ADENYLYLTRANSFERASE"/>
    <property type="match status" value="1"/>
</dbReference>
<dbReference type="Pfam" id="PF08335">
    <property type="entry name" value="GlnD_UR_UTase"/>
    <property type="match status" value="2"/>
</dbReference>
<dbReference type="Pfam" id="PF03710">
    <property type="entry name" value="GlnE"/>
    <property type="match status" value="2"/>
</dbReference>
<dbReference type="SUPFAM" id="SSF81301">
    <property type="entry name" value="Nucleotidyltransferase"/>
    <property type="match status" value="2"/>
</dbReference>
<dbReference type="SUPFAM" id="SSF81593">
    <property type="entry name" value="Nucleotidyltransferase substrate binding subunit/domain"/>
    <property type="match status" value="2"/>
</dbReference>
<comment type="function">
    <text evidence="1">Involved in the regulation of glutamine synthetase GlnA, a key enzyme in the process to assimilate ammonia. When cellular nitrogen levels are high, the C-terminal adenylyl transferase (AT) inactivates GlnA by covalent transfer of an adenylyl group from ATP to specific tyrosine residue of GlnA, thus reducing its activity. Conversely, when nitrogen levels are low, the N-terminal adenylyl removase (AR) activates GlnA by removing the adenylyl group by phosphorolysis, increasing its activity. The regulatory region of GlnE binds the signal transduction protein PII (GlnB) which indicates the nitrogen status of the cell.</text>
</comment>
<comment type="catalytic activity">
    <reaction evidence="1">
        <text>[glutamine synthetase]-O(4)-(5'-adenylyl)-L-tyrosine + phosphate = [glutamine synthetase]-L-tyrosine + ADP</text>
        <dbReference type="Rhea" id="RHEA:43716"/>
        <dbReference type="Rhea" id="RHEA-COMP:10660"/>
        <dbReference type="Rhea" id="RHEA-COMP:10661"/>
        <dbReference type="ChEBI" id="CHEBI:43474"/>
        <dbReference type="ChEBI" id="CHEBI:46858"/>
        <dbReference type="ChEBI" id="CHEBI:83624"/>
        <dbReference type="ChEBI" id="CHEBI:456216"/>
        <dbReference type="EC" id="2.7.7.89"/>
    </reaction>
</comment>
<comment type="catalytic activity">
    <reaction evidence="1">
        <text>[glutamine synthetase]-L-tyrosine + ATP = [glutamine synthetase]-O(4)-(5'-adenylyl)-L-tyrosine + diphosphate</text>
        <dbReference type="Rhea" id="RHEA:18589"/>
        <dbReference type="Rhea" id="RHEA-COMP:10660"/>
        <dbReference type="Rhea" id="RHEA-COMP:10661"/>
        <dbReference type="ChEBI" id="CHEBI:30616"/>
        <dbReference type="ChEBI" id="CHEBI:33019"/>
        <dbReference type="ChEBI" id="CHEBI:46858"/>
        <dbReference type="ChEBI" id="CHEBI:83624"/>
        <dbReference type="EC" id="2.7.7.42"/>
    </reaction>
</comment>
<comment type="cofactor">
    <cofactor evidence="1">
        <name>Mg(2+)</name>
        <dbReference type="ChEBI" id="CHEBI:18420"/>
    </cofactor>
</comment>
<comment type="similarity">
    <text evidence="1">Belongs to the GlnE family.</text>
</comment>
<reference key="1">
    <citation type="journal article" date="2004" name="Proc. Natl. Acad. Sci. U.S.A.">
        <title>Genome sequence of the deep-sea gamma-proteobacterium Idiomarina loihiensis reveals amino acid fermentation as a source of carbon and energy.</title>
        <authorList>
            <person name="Hou S."/>
            <person name="Saw J.H."/>
            <person name="Lee K.S."/>
            <person name="Freitas T.A."/>
            <person name="Belisle C."/>
            <person name="Kawarabayasi Y."/>
            <person name="Donachie S.P."/>
            <person name="Pikina A."/>
            <person name="Galperin M.Y."/>
            <person name="Koonin E.V."/>
            <person name="Makarova K.S."/>
            <person name="Omelchenko M.V."/>
            <person name="Sorokin A."/>
            <person name="Wolf Y.I."/>
            <person name="Li Q.X."/>
            <person name="Keum Y.S."/>
            <person name="Campbell S."/>
            <person name="Denery J."/>
            <person name="Aizawa S."/>
            <person name="Shibata S."/>
            <person name="Malahoff A."/>
            <person name="Alam M."/>
        </authorList>
    </citation>
    <scope>NUCLEOTIDE SEQUENCE [LARGE SCALE GENOMIC DNA]</scope>
    <source>
        <strain>ATCC BAA-735 / DSM 15497 / L2-TR</strain>
    </source>
</reference>
<gene>
    <name evidence="1" type="primary">glnE</name>
    <name type="ordered locus">IL1959</name>
</gene>
<organism>
    <name type="scientific">Idiomarina loihiensis (strain ATCC BAA-735 / DSM 15497 / L2-TR)</name>
    <dbReference type="NCBI Taxonomy" id="283942"/>
    <lineage>
        <taxon>Bacteria</taxon>
        <taxon>Pseudomonadati</taxon>
        <taxon>Pseudomonadota</taxon>
        <taxon>Gammaproteobacteria</taxon>
        <taxon>Alteromonadales</taxon>
        <taxon>Idiomarinaceae</taxon>
        <taxon>Idiomarina</taxon>
    </lineage>
</organism>